<reference key="1">
    <citation type="submission" date="1996-04" db="EMBL/GenBank/DDBJ databases">
        <title>Isolation and sequence of the group 1 outer membrane protein of Brucella abortus.</title>
        <authorList>
            <person name="Bearden S.W."/>
            <person name="Ficht T.A."/>
        </authorList>
    </citation>
    <scope>NUCLEOTIDE SEQUENCE [GENOMIC DNA]</scope>
</reference>
<reference key="2">
    <citation type="journal article" date="2005" name="Infect. Immun.">
        <title>Whole-genome analyses of speciation events in pathogenic Brucellae.</title>
        <authorList>
            <person name="Chain P.S."/>
            <person name="Comerci D.J."/>
            <person name="Tolmasky M.E."/>
            <person name="Larimer F.W."/>
            <person name="Malfatti S.A."/>
            <person name="Vergez L.M."/>
            <person name="Aguero F."/>
            <person name="Land M.L."/>
            <person name="Ugalde R.A."/>
            <person name="Garcia E."/>
        </authorList>
    </citation>
    <scope>NUCLEOTIDE SEQUENCE [LARGE SCALE GENOMIC DNA]</scope>
    <source>
        <strain>2308</strain>
    </source>
</reference>
<gene>
    <name evidence="1" type="primary">lpxA</name>
    <name type="ordered locus">BAB1_1173</name>
</gene>
<accession>Q2YRQ5</accession>
<accession>P54080</accession>
<accession>Q57CY8</accession>
<sequence length="278" mass="29386">MKETFIHPTALVEPGVELGQGVSVGPFCHVQSGAIIGNDCELMSHVVITGATTLGAGTKVYPHAILGCDPQNNKHKGGPTRLNVGVNCIIREGVTMHKGSDNARGYTSIGDNCSFLAYAHVAHDCDIGDYVTFSNNVMIGGHTSIGHHAILGGGAAVHQFVRVGHHAFIGGLAAVVSDLIPYGMAIGVHAHLGGLNIIGMKRSGMERKEIHNLRHAVRMLFDRTKPIRQRAQDVLAAIPDSPTVSDMISFINVDTKRAYCTPPLDAAHGGAGHDSDED</sequence>
<protein>
    <recommendedName>
        <fullName evidence="1">Acyl-[acyl-carrier-protein]--UDP-N-acetylglucosamine O-acyltransferase</fullName>
        <shortName evidence="1">UDP-N-acetylglucosamine acyltransferase</shortName>
        <ecNumber evidence="1">2.3.1.129</ecNumber>
    </recommendedName>
</protein>
<organism>
    <name type="scientific">Brucella abortus (strain 2308)</name>
    <dbReference type="NCBI Taxonomy" id="359391"/>
    <lineage>
        <taxon>Bacteria</taxon>
        <taxon>Pseudomonadati</taxon>
        <taxon>Pseudomonadota</taxon>
        <taxon>Alphaproteobacteria</taxon>
        <taxon>Hyphomicrobiales</taxon>
        <taxon>Brucellaceae</taxon>
        <taxon>Brucella/Ochrobactrum group</taxon>
        <taxon>Brucella</taxon>
    </lineage>
</organism>
<feature type="chain" id="PRO_0000188035" description="Acyl-[acyl-carrier-protein]--UDP-N-acetylglucosamine O-acyltransferase">
    <location>
        <begin position="1"/>
        <end position="278"/>
    </location>
</feature>
<feature type="sequence conflict" description="In Ref. 1." evidence="2" ref="1">
    <original>D</original>
    <variation>GH</variation>
    <location>
        <position position="129"/>
    </location>
</feature>
<keyword id="KW-0012">Acyltransferase</keyword>
<keyword id="KW-0963">Cytoplasm</keyword>
<keyword id="KW-0441">Lipid A biosynthesis</keyword>
<keyword id="KW-0444">Lipid biosynthesis</keyword>
<keyword id="KW-0443">Lipid metabolism</keyword>
<keyword id="KW-1185">Reference proteome</keyword>
<keyword id="KW-0677">Repeat</keyword>
<keyword id="KW-0808">Transferase</keyword>
<evidence type="ECO:0000255" key="1">
    <source>
        <dbReference type="HAMAP-Rule" id="MF_00387"/>
    </source>
</evidence>
<evidence type="ECO:0000305" key="2"/>
<comment type="function">
    <text evidence="1">Involved in the biosynthesis of lipid A, a phosphorylated glycolipid that anchors the lipopolysaccharide to the outer membrane of the cell.</text>
</comment>
<comment type="catalytic activity">
    <reaction evidence="1">
        <text>a (3R)-hydroxyacyl-[ACP] + UDP-N-acetyl-alpha-D-glucosamine = a UDP-3-O-[(3R)-3-hydroxyacyl]-N-acetyl-alpha-D-glucosamine + holo-[ACP]</text>
        <dbReference type="Rhea" id="RHEA:67812"/>
        <dbReference type="Rhea" id="RHEA-COMP:9685"/>
        <dbReference type="Rhea" id="RHEA-COMP:9945"/>
        <dbReference type="ChEBI" id="CHEBI:57705"/>
        <dbReference type="ChEBI" id="CHEBI:64479"/>
        <dbReference type="ChEBI" id="CHEBI:78827"/>
        <dbReference type="ChEBI" id="CHEBI:173225"/>
        <dbReference type="EC" id="2.3.1.129"/>
    </reaction>
</comment>
<comment type="pathway">
    <text evidence="1">Glycolipid biosynthesis; lipid IV(A) biosynthesis; lipid IV(A) from (3R)-3-hydroxytetradecanoyl-[acyl-carrier-protein] and UDP-N-acetyl-alpha-D-glucosamine: step 1/6.</text>
</comment>
<comment type="subunit">
    <text evidence="1">Homotrimer.</text>
</comment>
<comment type="subcellular location">
    <subcellularLocation>
        <location evidence="1">Cytoplasm</location>
    </subcellularLocation>
</comment>
<comment type="similarity">
    <text evidence="1">Belongs to the transferase hexapeptide repeat family. LpxA subfamily.</text>
</comment>
<comment type="sequence caution" evidence="2">
    <conflict type="erroneous initiation">
        <sequence resource="EMBL-CDS" id="AAA96791"/>
    </conflict>
</comment>
<name>LPXA_BRUA2</name>
<dbReference type="EC" id="2.3.1.129" evidence="1"/>
<dbReference type="EMBL" id="U51683">
    <property type="protein sequence ID" value="AAA96791.1"/>
    <property type="status" value="ALT_INIT"/>
    <property type="molecule type" value="Genomic_DNA"/>
</dbReference>
<dbReference type="EMBL" id="AM040264">
    <property type="protein sequence ID" value="CAJ11129.1"/>
    <property type="molecule type" value="Genomic_DNA"/>
</dbReference>
<dbReference type="RefSeq" id="WP_002964279.1">
    <property type="nucleotide sequence ID" value="NZ_KN046823.1"/>
</dbReference>
<dbReference type="SMR" id="Q2YRQ5"/>
<dbReference type="STRING" id="359391.BAB1_1173"/>
<dbReference type="GeneID" id="97533598"/>
<dbReference type="KEGG" id="bmf:BAB1_1173"/>
<dbReference type="PATRIC" id="fig|359391.11.peg.72"/>
<dbReference type="HOGENOM" id="CLU_061249_0_0_5"/>
<dbReference type="PhylomeDB" id="Q2YRQ5"/>
<dbReference type="BioCyc" id="MetaCyc:BAB_RS21540-MONOMER"/>
<dbReference type="UniPathway" id="UPA00359">
    <property type="reaction ID" value="UER00477"/>
</dbReference>
<dbReference type="Proteomes" id="UP000002719">
    <property type="component" value="Chromosome I"/>
</dbReference>
<dbReference type="GO" id="GO:0005737">
    <property type="term" value="C:cytoplasm"/>
    <property type="evidence" value="ECO:0007669"/>
    <property type="project" value="UniProtKB-SubCell"/>
</dbReference>
<dbReference type="GO" id="GO:0016020">
    <property type="term" value="C:membrane"/>
    <property type="evidence" value="ECO:0007669"/>
    <property type="project" value="GOC"/>
</dbReference>
<dbReference type="GO" id="GO:0008780">
    <property type="term" value="F:acyl-[acyl-carrier-protein]-UDP-N-acetylglucosamine O-acyltransferase activity"/>
    <property type="evidence" value="ECO:0007669"/>
    <property type="project" value="UniProtKB-UniRule"/>
</dbReference>
<dbReference type="GO" id="GO:0009245">
    <property type="term" value="P:lipid A biosynthetic process"/>
    <property type="evidence" value="ECO:0007669"/>
    <property type="project" value="UniProtKB-UniRule"/>
</dbReference>
<dbReference type="CDD" id="cd03351">
    <property type="entry name" value="LbH_UDP-GlcNAc_AT"/>
    <property type="match status" value="1"/>
</dbReference>
<dbReference type="Gene3D" id="2.160.10.10">
    <property type="entry name" value="Hexapeptide repeat proteins"/>
    <property type="match status" value="1"/>
</dbReference>
<dbReference type="Gene3D" id="1.20.1180.10">
    <property type="entry name" value="Udp N-acetylglucosamine O-acyltransferase, C-terminal domain"/>
    <property type="match status" value="1"/>
</dbReference>
<dbReference type="HAMAP" id="MF_00387">
    <property type="entry name" value="LpxA"/>
    <property type="match status" value="1"/>
</dbReference>
<dbReference type="InterPro" id="IPR029098">
    <property type="entry name" value="Acetyltransf_C"/>
</dbReference>
<dbReference type="InterPro" id="IPR037157">
    <property type="entry name" value="Acetyltransf_C_sf"/>
</dbReference>
<dbReference type="InterPro" id="IPR001451">
    <property type="entry name" value="Hexapep"/>
</dbReference>
<dbReference type="InterPro" id="IPR018357">
    <property type="entry name" value="Hexapep_transf_CS"/>
</dbReference>
<dbReference type="InterPro" id="IPR010137">
    <property type="entry name" value="Lipid_A_LpxA"/>
</dbReference>
<dbReference type="InterPro" id="IPR011004">
    <property type="entry name" value="Trimer_LpxA-like_sf"/>
</dbReference>
<dbReference type="NCBIfam" id="TIGR01852">
    <property type="entry name" value="lipid_A_lpxA"/>
    <property type="match status" value="1"/>
</dbReference>
<dbReference type="NCBIfam" id="NF003657">
    <property type="entry name" value="PRK05289.1"/>
    <property type="match status" value="1"/>
</dbReference>
<dbReference type="PANTHER" id="PTHR43480">
    <property type="entry name" value="ACYL-[ACYL-CARRIER-PROTEIN]--UDP-N-ACETYLGLUCOSAMINE O-ACYLTRANSFERASE"/>
    <property type="match status" value="1"/>
</dbReference>
<dbReference type="PANTHER" id="PTHR43480:SF1">
    <property type="entry name" value="ACYL-[ACYL-CARRIER-PROTEIN]--UDP-N-ACETYLGLUCOSAMINE O-ACYLTRANSFERASE, MITOCHONDRIAL-RELATED"/>
    <property type="match status" value="1"/>
</dbReference>
<dbReference type="Pfam" id="PF13720">
    <property type="entry name" value="Acetyltransf_11"/>
    <property type="match status" value="1"/>
</dbReference>
<dbReference type="Pfam" id="PF00132">
    <property type="entry name" value="Hexapep"/>
    <property type="match status" value="2"/>
</dbReference>
<dbReference type="PIRSF" id="PIRSF000456">
    <property type="entry name" value="UDP-GlcNAc_acltr"/>
    <property type="match status" value="1"/>
</dbReference>
<dbReference type="SUPFAM" id="SSF51161">
    <property type="entry name" value="Trimeric LpxA-like enzymes"/>
    <property type="match status" value="1"/>
</dbReference>
<dbReference type="PROSITE" id="PS00101">
    <property type="entry name" value="HEXAPEP_TRANSFERASES"/>
    <property type="match status" value="1"/>
</dbReference>
<proteinExistence type="inferred from homology"/>